<keyword id="KW-0687">Ribonucleoprotein</keyword>
<keyword id="KW-0689">Ribosomal protein</keyword>
<organism>
    <name type="scientific">Lactobacillus johnsonii (strain CNCM I-12250 / La1 / NCC 533)</name>
    <dbReference type="NCBI Taxonomy" id="257314"/>
    <lineage>
        <taxon>Bacteria</taxon>
        <taxon>Bacillati</taxon>
        <taxon>Bacillota</taxon>
        <taxon>Bacilli</taxon>
        <taxon>Lactobacillales</taxon>
        <taxon>Lactobacillaceae</taxon>
        <taxon>Lactobacillus</taxon>
    </lineage>
</organism>
<accession>Q74L72</accession>
<name>RL30_LACJO</name>
<feature type="chain" id="PRO_0000347109" description="Large ribosomal subunit protein uL30">
    <location>
        <begin position="1"/>
        <end position="60"/>
    </location>
</feature>
<comment type="subunit">
    <text evidence="1">Part of the 50S ribosomal subunit.</text>
</comment>
<comment type="similarity">
    <text evidence="1">Belongs to the universal ribosomal protein uL30 family.</text>
</comment>
<gene>
    <name evidence="1" type="primary">rpmD</name>
    <name type="ordered locus">LJ_0354.2</name>
    <name type="ORF">LJ_0354b</name>
</gene>
<reference key="1">
    <citation type="journal article" date="2004" name="Proc. Natl. Acad. Sci. U.S.A.">
        <title>The genome sequence of the probiotic intestinal bacterium Lactobacillus johnsonii NCC 533.</title>
        <authorList>
            <person name="Pridmore R.D."/>
            <person name="Berger B."/>
            <person name="Desiere F."/>
            <person name="Vilanova D."/>
            <person name="Barretto C."/>
            <person name="Pittet A.-C."/>
            <person name="Zwahlen M.-C."/>
            <person name="Rouvet M."/>
            <person name="Altermann E."/>
            <person name="Barrangou R."/>
            <person name="Mollet B."/>
            <person name="Mercenier A."/>
            <person name="Klaenhammer T."/>
            <person name="Arigoni F."/>
            <person name="Schell M.A."/>
        </authorList>
    </citation>
    <scope>NUCLEOTIDE SEQUENCE [LARGE SCALE GENOMIC DNA]</scope>
    <source>
        <strain>CNCM I-1225 / La1 / NCC 533</strain>
    </source>
</reference>
<proteinExistence type="inferred from homology"/>
<protein>
    <recommendedName>
        <fullName evidence="1">Large ribosomal subunit protein uL30</fullName>
    </recommendedName>
    <alternativeName>
        <fullName evidence="2">50S ribosomal protein L30</fullName>
    </alternativeName>
</protein>
<evidence type="ECO:0000255" key="1">
    <source>
        <dbReference type="HAMAP-Rule" id="MF_01371"/>
    </source>
</evidence>
<evidence type="ECO:0000305" key="2"/>
<dbReference type="EMBL" id="AE017198">
    <property type="protein sequence ID" value="AAS08343.1"/>
    <property type="molecule type" value="Genomic_DNA"/>
</dbReference>
<dbReference type="SMR" id="Q74L72"/>
<dbReference type="KEGG" id="ljo:LJ_0354b"/>
<dbReference type="eggNOG" id="COG1841">
    <property type="taxonomic scope" value="Bacteria"/>
</dbReference>
<dbReference type="HOGENOM" id="CLU_131047_2_1_9"/>
<dbReference type="Proteomes" id="UP000000581">
    <property type="component" value="Chromosome"/>
</dbReference>
<dbReference type="GO" id="GO:0022625">
    <property type="term" value="C:cytosolic large ribosomal subunit"/>
    <property type="evidence" value="ECO:0007669"/>
    <property type="project" value="TreeGrafter"/>
</dbReference>
<dbReference type="GO" id="GO:0003735">
    <property type="term" value="F:structural constituent of ribosome"/>
    <property type="evidence" value="ECO:0007669"/>
    <property type="project" value="InterPro"/>
</dbReference>
<dbReference type="GO" id="GO:0006412">
    <property type="term" value="P:translation"/>
    <property type="evidence" value="ECO:0007669"/>
    <property type="project" value="UniProtKB-UniRule"/>
</dbReference>
<dbReference type="CDD" id="cd01658">
    <property type="entry name" value="Ribosomal_L30"/>
    <property type="match status" value="1"/>
</dbReference>
<dbReference type="Gene3D" id="3.30.1390.20">
    <property type="entry name" value="Ribosomal protein L30, ferredoxin-like fold domain"/>
    <property type="match status" value="1"/>
</dbReference>
<dbReference type="HAMAP" id="MF_01371_B">
    <property type="entry name" value="Ribosomal_uL30_B"/>
    <property type="match status" value="1"/>
</dbReference>
<dbReference type="InterPro" id="IPR036919">
    <property type="entry name" value="Ribo_uL30_ferredoxin-like_sf"/>
</dbReference>
<dbReference type="InterPro" id="IPR005996">
    <property type="entry name" value="Ribosomal_uL30_bac-type"/>
</dbReference>
<dbReference type="InterPro" id="IPR016082">
    <property type="entry name" value="Ribosomal_uL30_ferredoxin-like"/>
</dbReference>
<dbReference type="NCBIfam" id="TIGR01308">
    <property type="entry name" value="rpmD_bact"/>
    <property type="match status" value="1"/>
</dbReference>
<dbReference type="PANTHER" id="PTHR15892:SF2">
    <property type="entry name" value="LARGE RIBOSOMAL SUBUNIT PROTEIN UL30M"/>
    <property type="match status" value="1"/>
</dbReference>
<dbReference type="PANTHER" id="PTHR15892">
    <property type="entry name" value="MITOCHONDRIAL RIBOSOMAL PROTEIN L30"/>
    <property type="match status" value="1"/>
</dbReference>
<dbReference type="Pfam" id="PF00327">
    <property type="entry name" value="Ribosomal_L30"/>
    <property type="match status" value="1"/>
</dbReference>
<dbReference type="PIRSF" id="PIRSF002211">
    <property type="entry name" value="Ribosomal_L30_bac-type"/>
    <property type="match status" value="1"/>
</dbReference>
<dbReference type="SUPFAM" id="SSF55129">
    <property type="entry name" value="Ribosomal protein L30p/L7e"/>
    <property type="match status" value="1"/>
</dbReference>
<sequence>MDLKVTLIKSVAHRLPKQRKIVKALGLGKVNSTVVLPDNAATRGALLKIAHLISVEEVNK</sequence>